<keyword id="KW-0028">Amino-acid biosynthesis</keyword>
<keyword id="KW-0032">Aminotransferase</keyword>
<keyword id="KW-0963">Cytoplasm</keyword>
<keyword id="KW-0663">Pyridoxal phosphate</keyword>
<keyword id="KW-0664">Pyridoxine biosynthesis</keyword>
<keyword id="KW-0718">Serine biosynthesis</keyword>
<keyword id="KW-0808">Transferase</keyword>
<proteinExistence type="inferred from homology"/>
<reference key="1">
    <citation type="journal article" date="2009" name="J. Bacteriol.">
        <title>Genome sequence of Azotobacter vinelandii, an obligate aerobe specialized to support diverse anaerobic metabolic processes.</title>
        <authorList>
            <person name="Setubal J.C."/>
            <person name="Dos Santos P."/>
            <person name="Goldman B.S."/>
            <person name="Ertesvaag H."/>
            <person name="Espin G."/>
            <person name="Rubio L.M."/>
            <person name="Valla S."/>
            <person name="Almeida N.F."/>
            <person name="Balasubramanian D."/>
            <person name="Cromes L."/>
            <person name="Curatti L."/>
            <person name="Du Z."/>
            <person name="Godsy E."/>
            <person name="Goodner B."/>
            <person name="Hellner-Burris K."/>
            <person name="Hernandez J.A."/>
            <person name="Houmiel K."/>
            <person name="Imperial J."/>
            <person name="Kennedy C."/>
            <person name="Larson T.J."/>
            <person name="Latreille P."/>
            <person name="Ligon L.S."/>
            <person name="Lu J."/>
            <person name="Maerk M."/>
            <person name="Miller N.M."/>
            <person name="Norton S."/>
            <person name="O'Carroll I.P."/>
            <person name="Paulsen I."/>
            <person name="Raulfs E.C."/>
            <person name="Roemer R."/>
            <person name="Rosser J."/>
            <person name="Segura D."/>
            <person name="Slater S."/>
            <person name="Stricklin S.L."/>
            <person name="Studholme D.J."/>
            <person name="Sun J."/>
            <person name="Viana C.J."/>
            <person name="Wallin E."/>
            <person name="Wang B."/>
            <person name="Wheeler C."/>
            <person name="Zhu H."/>
            <person name="Dean D.R."/>
            <person name="Dixon R."/>
            <person name="Wood D."/>
        </authorList>
    </citation>
    <scope>NUCLEOTIDE SEQUENCE [LARGE SCALE GENOMIC DNA]</scope>
    <source>
        <strain>DJ / ATCC BAA-1303</strain>
    </source>
</reference>
<sequence length="361" mass="39636">MSKRAFNFCAGPAALPTAVLERAQAEFLDWQGKGLSVMEMSHRSDEYVAIAAKAEQDLRDLLGIPSNYKVLFLQGGASQQFAEIPLNLLPEGGVADYVDTGIWSRKSMEEARRFGTVNVAASAKAYDYFALPGQNEWRLSKDAAYLHYASNETIGGLQFDWVPETGEVPLVVDMSSDILSRPIDVSRFGLIYAGAQKNIGPSGLVVVIVREDLLGRARSVCPTMLDYKVAADNGSMYNTPATFSWYLSGLVFEWLKEQGGVEAMAQRNRAKKDLLYGFIDGSGFYTNPIAVDARSWMNVPFRLADEKLDKPFLAGAEERGLLNLKGHRSVGGMRASIYNAVGLDAVEALVAYMAEFEKEHG</sequence>
<organism>
    <name type="scientific">Azotobacter vinelandii (strain DJ / ATCC BAA-1303)</name>
    <dbReference type="NCBI Taxonomy" id="322710"/>
    <lineage>
        <taxon>Bacteria</taxon>
        <taxon>Pseudomonadati</taxon>
        <taxon>Pseudomonadota</taxon>
        <taxon>Gammaproteobacteria</taxon>
        <taxon>Pseudomonadales</taxon>
        <taxon>Pseudomonadaceae</taxon>
        <taxon>Azotobacter</taxon>
    </lineage>
</organism>
<name>SERC_AZOVD</name>
<protein>
    <recommendedName>
        <fullName evidence="1">Phosphoserine aminotransferase</fullName>
        <ecNumber evidence="1">2.6.1.52</ecNumber>
    </recommendedName>
    <alternativeName>
        <fullName evidence="1">Phosphohydroxythreonine aminotransferase</fullName>
        <shortName evidence="1">PSAT</shortName>
    </alternativeName>
</protein>
<accession>C1DRQ9</accession>
<dbReference type="EC" id="2.6.1.52" evidence="1"/>
<dbReference type="EMBL" id="CP001157">
    <property type="protein sequence ID" value="ACO77797.1"/>
    <property type="molecule type" value="Genomic_DNA"/>
</dbReference>
<dbReference type="RefSeq" id="WP_012700212.1">
    <property type="nucleotide sequence ID" value="NC_012560.1"/>
</dbReference>
<dbReference type="SMR" id="C1DRQ9"/>
<dbReference type="STRING" id="322710.Avin_15820"/>
<dbReference type="EnsemblBacteria" id="ACO77797">
    <property type="protein sequence ID" value="ACO77797"/>
    <property type="gene ID" value="Avin_15820"/>
</dbReference>
<dbReference type="GeneID" id="88184873"/>
<dbReference type="KEGG" id="avn:Avin_15820"/>
<dbReference type="eggNOG" id="COG1932">
    <property type="taxonomic scope" value="Bacteria"/>
</dbReference>
<dbReference type="HOGENOM" id="CLU_034866_0_2_6"/>
<dbReference type="OrthoDB" id="9809412at2"/>
<dbReference type="UniPathway" id="UPA00135">
    <property type="reaction ID" value="UER00197"/>
</dbReference>
<dbReference type="UniPathway" id="UPA00244">
    <property type="reaction ID" value="UER00311"/>
</dbReference>
<dbReference type="Proteomes" id="UP000002424">
    <property type="component" value="Chromosome"/>
</dbReference>
<dbReference type="GO" id="GO:0005737">
    <property type="term" value="C:cytoplasm"/>
    <property type="evidence" value="ECO:0007669"/>
    <property type="project" value="UniProtKB-SubCell"/>
</dbReference>
<dbReference type="GO" id="GO:0004648">
    <property type="term" value="F:O-phospho-L-serine:2-oxoglutarate aminotransferase activity"/>
    <property type="evidence" value="ECO:0007669"/>
    <property type="project" value="UniProtKB-UniRule"/>
</dbReference>
<dbReference type="GO" id="GO:0030170">
    <property type="term" value="F:pyridoxal phosphate binding"/>
    <property type="evidence" value="ECO:0007669"/>
    <property type="project" value="UniProtKB-UniRule"/>
</dbReference>
<dbReference type="GO" id="GO:0006564">
    <property type="term" value="P:L-serine biosynthetic process"/>
    <property type="evidence" value="ECO:0007669"/>
    <property type="project" value="UniProtKB-UniRule"/>
</dbReference>
<dbReference type="GO" id="GO:0008615">
    <property type="term" value="P:pyridoxine biosynthetic process"/>
    <property type="evidence" value="ECO:0007669"/>
    <property type="project" value="UniProtKB-UniRule"/>
</dbReference>
<dbReference type="CDD" id="cd00611">
    <property type="entry name" value="PSAT_like"/>
    <property type="match status" value="1"/>
</dbReference>
<dbReference type="FunFam" id="3.40.640.10:FF:000010">
    <property type="entry name" value="Phosphoserine aminotransferase"/>
    <property type="match status" value="1"/>
</dbReference>
<dbReference type="FunFam" id="3.90.1150.10:FF:000006">
    <property type="entry name" value="Phosphoserine aminotransferase"/>
    <property type="match status" value="1"/>
</dbReference>
<dbReference type="Gene3D" id="3.90.1150.10">
    <property type="entry name" value="Aspartate Aminotransferase, domain 1"/>
    <property type="match status" value="1"/>
</dbReference>
<dbReference type="Gene3D" id="3.40.640.10">
    <property type="entry name" value="Type I PLP-dependent aspartate aminotransferase-like (Major domain)"/>
    <property type="match status" value="1"/>
</dbReference>
<dbReference type="HAMAP" id="MF_00160">
    <property type="entry name" value="SerC_aminotrans_5"/>
    <property type="match status" value="1"/>
</dbReference>
<dbReference type="InterPro" id="IPR000192">
    <property type="entry name" value="Aminotrans_V_dom"/>
</dbReference>
<dbReference type="InterPro" id="IPR022278">
    <property type="entry name" value="Pser_aminoTfrase"/>
</dbReference>
<dbReference type="InterPro" id="IPR015424">
    <property type="entry name" value="PyrdxlP-dep_Trfase"/>
</dbReference>
<dbReference type="InterPro" id="IPR015421">
    <property type="entry name" value="PyrdxlP-dep_Trfase_major"/>
</dbReference>
<dbReference type="InterPro" id="IPR015422">
    <property type="entry name" value="PyrdxlP-dep_Trfase_small"/>
</dbReference>
<dbReference type="NCBIfam" id="NF003764">
    <property type="entry name" value="PRK05355.1"/>
    <property type="match status" value="1"/>
</dbReference>
<dbReference type="NCBIfam" id="TIGR01364">
    <property type="entry name" value="serC_1"/>
    <property type="match status" value="1"/>
</dbReference>
<dbReference type="PANTHER" id="PTHR43247">
    <property type="entry name" value="PHOSPHOSERINE AMINOTRANSFERASE"/>
    <property type="match status" value="1"/>
</dbReference>
<dbReference type="PANTHER" id="PTHR43247:SF1">
    <property type="entry name" value="PHOSPHOSERINE AMINOTRANSFERASE"/>
    <property type="match status" value="1"/>
</dbReference>
<dbReference type="Pfam" id="PF00266">
    <property type="entry name" value="Aminotran_5"/>
    <property type="match status" value="1"/>
</dbReference>
<dbReference type="PIRSF" id="PIRSF000525">
    <property type="entry name" value="SerC"/>
    <property type="match status" value="1"/>
</dbReference>
<dbReference type="SUPFAM" id="SSF53383">
    <property type="entry name" value="PLP-dependent transferases"/>
    <property type="match status" value="1"/>
</dbReference>
<gene>
    <name evidence="1" type="primary">serC</name>
    <name type="ordered locus">Avin_15820</name>
</gene>
<feature type="chain" id="PRO_1000203511" description="Phosphoserine aminotransferase">
    <location>
        <begin position="1"/>
        <end position="361"/>
    </location>
</feature>
<feature type="binding site" evidence="1">
    <location>
        <position position="43"/>
    </location>
    <ligand>
        <name>L-glutamate</name>
        <dbReference type="ChEBI" id="CHEBI:29985"/>
    </ligand>
</feature>
<feature type="binding site" evidence="1">
    <location>
        <begin position="77"/>
        <end position="78"/>
    </location>
    <ligand>
        <name>pyridoxal 5'-phosphate</name>
        <dbReference type="ChEBI" id="CHEBI:597326"/>
    </ligand>
</feature>
<feature type="binding site" evidence="1">
    <location>
        <position position="103"/>
    </location>
    <ligand>
        <name>pyridoxal 5'-phosphate</name>
        <dbReference type="ChEBI" id="CHEBI:597326"/>
    </ligand>
</feature>
<feature type="binding site" evidence="1">
    <location>
        <position position="153"/>
    </location>
    <ligand>
        <name>pyridoxal 5'-phosphate</name>
        <dbReference type="ChEBI" id="CHEBI:597326"/>
    </ligand>
</feature>
<feature type="binding site" evidence="1">
    <location>
        <position position="173"/>
    </location>
    <ligand>
        <name>pyridoxal 5'-phosphate</name>
        <dbReference type="ChEBI" id="CHEBI:597326"/>
    </ligand>
</feature>
<feature type="binding site" evidence="1">
    <location>
        <position position="196"/>
    </location>
    <ligand>
        <name>pyridoxal 5'-phosphate</name>
        <dbReference type="ChEBI" id="CHEBI:597326"/>
    </ligand>
</feature>
<feature type="binding site" evidence="1">
    <location>
        <begin position="238"/>
        <end position="239"/>
    </location>
    <ligand>
        <name>pyridoxal 5'-phosphate</name>
        <dbReference type="ChEBI" id="CHEBI:597326"/>
    </ligand>
</feature>
<feature type="modified residue" description="N6-(pyridoxal phosphate)lysine" evidence="1">
    <location>
        <position position="197"/>
    </location>
</feature>
<evidence type="ECO:0000255" key="1">
    <source>
        <dbReference type="HAMAP-Rule" id="MF_00160"/>
    </source>
</evidence>
<comment type="function">
    <text evidence="1">Catalyzes the reversible conversion of 3-phosphohydroxypyruvate to phosphoserine and of 3-hydroxy-2-oxo-4-phosphonooxybutanoate to phosphohydroxythreonine.</text>
</comment>
<comment type="catalytic activity">
    <reaction evidence="1">
        <text>O-phospho-L-serine + 2-oxoglutarate = 3-phosphooxypyruvate + L-glutamate</text>
        <dbReference type="Rhea" id="RHEA:14329"/>
        <dbReference type="ChEBI" id="CHEBI:16810"/>
        <dbReference type="ChEBI" id="CHEBI:18110"/>
        <dbReference type="ChEBI" id="CHEBI:29985"/>
        <dbReference type="ChEBI" id="CHEBI:57524"/>
        <dbReference type="EC" id="2.6.1.52"/>
    </reaction>
</comment>
<comment type="catalytic activity">
    <reaction evidence="1">
        <text>4-(phosphooxy)-L-threonine + 2-oxoglutarate = (R)-3-hydroxy-2-oxo-4-phosphooxybutanoate + L-glutamate</text>
        <dbReference type="Rhea" id="RHEA:16573"/>
        <dbReference type="ChEBI" id="CHEBI:16810"/>
        <dbReference type="ChEBI" id="CHEBI:29985"/>
        <dbReference type="ChEBI" id="CHEBI:58452"/>
        <dbReference type="ChEBI" id="CHEBI:58538"/>
        <dbReference type="EC" id="2.6.1.52"/>
    </reaction>
</comment>
<comment type="cofactor">
    <cofactor evidence="1">
        <name>pyridoxal 5'-phosphate</name>
        <dbReference type="ChEBI" id="CHEBI:597326"/>
    </cofactor>
    <text evidence="1">Binds 1 pyridoxal phosphate per subunit.</text>
</comment>
<comment type="pathway">
    <text evidence="1">Amino-acid biosynthesis; L-serine biosynthesis; L-serine from 3-phospho-D-glycerate: step 2/3.</text>
</comment>
<comment type="pathway">
    <text evidence="1">Cofactor biosynthesis; pyridoxine 5'-phosphate biosynthesis; pyridoxine 5'-phosphate from D-erythrose 4-phosphate: step 3/5.</text>
</comment>
<comment type="subunit">
    <text evidence="1">Homodimer.</text>
</comment>
<comment type="subcellular location">
    <subcellularLocation>
        <location evidence="1">Cytoplasm</location>
    </subcellularLocation>
</comment>
<comment type="similarity">
    <text evidence="1">Belongs to the class-V pyridoxal-phosphate-dependent aminotransferase family. SerC subfamily.</text>
</comment>